<gene>
    <name evidence="1" type="primary">rnpA</name>
    <name type="ordered locus">BURPS1106A_0105</name>
</gene>
<sequence>MQASAAFPKAARLLKTDEFSSVFRLRPWRRTAHFVIYGKPTGRDARLGLVIGKKYAARAVTRNLVKRLAREAFRTRRAEFAGWDILLRLHARFDKKAMPSAASAPLAALCAGEIRELLDRAAREVARRNGAKPASE</sequence>
<keyword id="KW-0255">Endonuclease</keyword>
<keyword id="KW-0378">Hydrolase</keyword>
<keyword id="KW-0540">Nuclease</keyword>
<keyword id="KW-0694">RNA-binding</keyword>
<keyword id="KW-0819">tRNA processing</keyword>
<comment type="function">
    <text evidence="1">RNaseP catalyzes the removal of the 5'-leader sequence from pre-tRNA to produce the mature 5'-terminus. It can also cleave other RNA substrates such as 4.5S RNA. The protein component plays an auxiliary but essential role in vivo by binding to the 5'-leader sequence and broadening the substrate specificity of the ribozyme.</text>
</comment>
<comment type="catalytic activity">
    <reaction evidence="1">
        <text>Endonucleolytic cleavage of RNA, removing 5'-extranucleotides from tRNA precursor.</text>
        <dbReference type="EC" id="3.1.26.5"/>
    </reaction>
</comment>
<comment type="subunit">
    <text evidence="1">Consists of a catalytic RNA component (M1 or rnpB) and a protein subunit.</text>
</comment>
<comment type="similarity">
    <text evidence="1">Belongs to the RnpA family.</text>
</comment>
<reference key="1">
    <citation type="journal article" date="2010" name="Genome Biol. Evol.">
        <title>Continuing evolution of Burkholderia mallei through genome reduction and large-scale rearrangements.</title>
        <authorList>
            <person name="Losada L."/>
            <person name="Ronning C.M."/>
            <person name="DeShazer D."/>
            <person name="Woods D."/>
            <person name="Fedorova N."/>
            <person name="Kim H.S."/>
            <person name="Shabalina S.A."/>
            <person name="Pearson T.R."/>
            <person name="Brinkac L."/>
            <person name="Tan P."/>
            <person name="Nandi T."/>
            <person name="Crabtree J."/>
            <person name="Badger J."/>
            <person name="Beckstrom-Sternberg S."/>
            <person name="Saqib M."/>
            <person name="Schutzer S.E."/>
            <person name="Keim P."/>
            <person name="Nierman W.C."/>
        </authorList>
    </citation>
    <scope>NUCLEOTIDE SEQUENCE [LARGE SCALE GENOMIC DNA]</scope>
    <source>
        <strain>1106a</strain>
    </source>
</reference>
<organism>
    <name type="scientific">Burkholderia pseudomallei (strain 1106a)</name>
    <dbReference type="NCBI Taxonomy" id="357348"/>
    <lineage>
        <taxon>Bacteria</taxon>
        <taxon>Pseudomonadati</taxon>
        <taxon>Pseudomonadota</taxon>
        <taxon>Betaproteobacteria</taxon>
        <taxon>Burkholderiales</taxon>
        <taxon>Burkholderiaceae</taxon>
        <taxon>Burkholderia</taxon>
        <taxon>pseudomallei group</taxon>
    </lineage>
</organism>
<proteinExistence type="inferred from homology"/>
<accession>A3NPW9</accession>
<dbReference type="EC" id="3.1.26.5" evidence="1"/>
<dbReference type="EMBL" id="CP000572">
    <property type="protein sequence ID" value="ABN90142.1"/>
    <property type="molecule type" value="Genomic_DNA"/>
</dbReference>
<dbReference type="SMR" id="A3NPW9"/>
<dbReference type="KEGG" id="bpl:BURPS1106A_0105"/>
<dbReference type="HOGENOM" id="CLU_117179_11_1_4"/>
<dbReference type="Proteomes" id="UP000006738">
    <property type="component" value="Chromosome I"/>
</dbReference>
<dbReference type="GO" id="GO:0030677">
    <property type="term" value="C:ribonuclease P complex"/>
    <property type="evidence" value="ECO:0007669"/>
    <property type="project" value="TreeGrafter"/>
</dbReference>
<dbReference type="GO" id="GO:0042781">
    <property type="term" value="F:3'-tRNA processing endoribonuclease activity"/>
    <property type="evidence" value="ECO:0007669"/>
    <property type="project" value="TreeGrafter"/>
</dbReference>
<dbReference type="GO" id="GO:0004526">
    <property type="term" value="F:ribonuclease P activity"/>
    <property type="evidence" value="ECO:0007669"/>
    <property type="project" value="UniProtKB-UniRule"/>
</dbReference>
<dbReference type="GO" id="GO:0000049">
    <property type="term" value="F:tRNA binding"/>
    <property type="evidence" value="ECO:0007669"/>
    <property type="project" value="UniProtKB-UniRule"/>
</dbReference>
<dbReference type="GO" id="GO:0001682">
    <property type="term" value="P:tRNA 5'-leader removal"/>
    <property type="evidence" value="ECO:0007669"/>
    <property type="project" value="UniProtKB-UniRule"/>
</dbReference>
<dbReference type="Gene3D" id="3.30.230.10">
    <property type="match status" value="1"/>
</dbReference>
<dbReference type="HAMAP" id="MF_00227">
    <property type="entry name" value="RNase_P"/>
    <property type="match status" value="1"/>
</dbReference>
<dbReference type="InterPro" id="IPR020568">
    <property type="entry name" value="Ribosomal_Su5_D2-typ_SF"/>
</dbReference>
<dbReference type="InterPro" id="IPR014721">
    <property type="entry name" value="Ribsml_uS5_D2-typ_fold_subgr"/>
</dbReference>
<dbReference type="InterPro" id="IPR000100">
    <property type="entry name" value="RNase_P"/>
</dbReference>
<dbReference type="InterPro" id="IPR020539">
    <property type="entry name" value="RNase_P_CS"/>
</dbReference>
<dbReference type="NCBIfam" id="TIGR00188">
    <property type="entry name" value="rnpA"/>
    <property type="match status" value="1"/>
</dbReference>
<dbReference type="PANTHER" id="PTHR33992">
    <property type="entry name" value="RIBONUCLEASE P PROTEIN COMPONENT"/>
    <property type="match status" value="1"/>
</dbReference>
<dbReference type="PANTHER" id="PTHR33992:SF1">
    <property type="entry name" value="RIBONUCLEASE P PROTEIN COMPONENT"/>
    <property type="match status" value="1"/>
</dbReference>
<dbReference type="Pfam" id="PF00825">
    <property type="entry name" value="Ribonuclease_P"/>
    <property type="match status" value="1"/>
</dbReference>
<dbReference type="SUPFAM" id="SSF54211">
    <property type="entry name" value="Ribosomal protein S5 domain 2-like"/>
    <property type="match status" value="1"/>
</dbReference>
<dbReference type="PROSITE" id="PS00648">
    <property type="entry name" value="RIBONUCLEASE_P"/>
    <property type="match status" value="1"/>
</dbReference>
<evidence type="ECO:0000255" key="1">
    <source>
        <dbReference type="HAMAP-Rule" id="MF_00227"/>
    </source>
</evidence>
<feature type="chain" id="PRO_1000021384" description="Ribonuclease P protein component">
    <location>
        <begin position="1"/>
        <end position="136"/>
    </location>
</feature>
<protein>
    <recommendedName>
        <fullName evidence="1">Ribonuclease P protein component</fullName>
        <shortName evidence="1">RNase P protein</shortName>
        <shortName evidence="1">RNaseP protein</shortName>
        <ecNumber evidence="1">3.1.26.5</ecNumber>
    </recommendedName>
    <alternativeName>
        <fullName evidence="1">Protein C5</fullName>
    </alternativeName>
</protein>
<name>RNPA_BURP0</name>